<feature type="chain" id="PRO_0000398823" description="Acyl-CoA--sterol O-acyltransferase 1">
    <location>
        <begin position="1"/>
        <end position="345"/>
    </location>
</feature>
<feature type="transmembrane region" description="Helical" evidence="1">
    <location>
        <begin position="1"/>
        <end position="21"/>
    </location>
</feature>
<feature type="transmembrane region" description="Helical" evidence="1">
    <location>
        <begin position="32"/>
        <end position="52"/>
    </location>
</feature>
<feature type="transmembrane region" description="Helical" evidence="1">
    <location>
        <begin position="54"/>
        <end position="74"/>
    </location>
</feature>
<feature type="transmembrane region" description="Helical" evidence="1">
    <location>
        <begin position="86"/>
        <end position="106"/>
    </location>
</feature>
<feature type="transmembrane region" description="Helical" evidence="1">
    <location>
        <begin position="120"/>
        <end position="140"/>
    </location>
</feature>
<feature type="transmembrane region" description="Helical" evidence="1">
    <location>
        <begin position="148"/>
        <end position="168"/>
    </location>
</feature>
<feature type="transmembrane region" description="Helical" evidence="1">
    <location>
        <begin position="231"/>
        <end position="251"/>
    </location>
</feature>
<feature type="transmembrane region" description="Helical" evidence="1">
    <location>
        <begin position="258"/>
        <end position="278"/>
    </location>
</feature>
<feature type="transmembrane region" description="Helical" evidence="1">
    <location>
        <begin position="291"/>
        <end position="311"/>
    </location>
</feature>
<dbReference type="EC" id="2.3.1.-"/>
<dbReference type="EMBL" id="AL049711">
    <property type="protein sequence ID" value="CAB41317.1"/>
    <property type="molecule type" value="Genomic_DNA"/>
</dbReference>
<dbReference type="EMBL" id="CP002686">
    <property type="protein sequence ID" value="AEE78870.1"/>
    <property type="molecule type" value="Genomic_DNA"/>
</dbReference>
<dbReference type="EMBL" id="BT010536">
    <property type="protein sequence ID" value="AAQ65159.1"/>
    <property type="molecule type" value="mRNA"/>
</dbReference>
<dbReference type="EMBL" id="AK175140">
    <property type="protein sequence ID" value="BAD42903.1"/>
    <property type="molecule type" value="mRNA"/>
</dbReference>
<dbReference type="PIR" id="T49076">
    <property type="entry name" value="T49076"/>
</dbReference>
<dbReference type="RefSeq" id="NP_190765.1">
    <property type="nucleotide sequence ID" value="NM_115056.3"/>
</dbReference>
<dbReference type="FunCoup" id="Q9SV07">
    <property type="interactions" value="1"/>
</dbReference>
<dbReference type="IntAct" id="Q9SV07">
    <property type="interactions" value="1"/>
</dbReference>
<dbReference type="STRING" id="3702.Q9SV07"/>
<dbReference type="PaxDb" id="3702-AT3G51970.1"/>
<dbReference type="EnsemblPlants" id="AT3G51970.1">
    <property type="protein sequence ID" value="AT3G51970.1"/>
    <property type="gene ID" value="AT3G51970"/>
</dbReference>
<dbReference type="GeneID" id="824360"/>
<dbReference type="Gramene" id="AT3G51970.1">
    <property type="protein sequence ID" value="AT3G51970.1"/>
    <property type="gene ID" value="AT3G51970"/>
</dbReference>
<dbReference type="KEGG" id="ath:AT3G51970"/>
<dbReference type="Araport" id="AT3G51970"/>
<dbReference type="TAIR" id="AT3G51970">
    <property type="gene designation" value="ASAT1"/>
</dbReference>
<dbReference type="eggNOG" id="ENOG502QSCR">
    <property type="taxonomic scope" value="Eukaryota"/>
</dbReference>
<dbReference type="HOGENOM" id="CLU_045902_0_0_1"/>
<dbReference type="InParanoid" id="Q9SV07"/>
<dbReference type="OMA" id="TINGRWR"/>
<dbReference type="OrthoDB" id="1077582at2759"/>
<dbReference type="PhylomeDB" id="Q9SV07"/>
<dbReference type="BioCyc" id="ARA:AT3G51970-MONOMER"/>
<dbReference type="PRO" id="PR:Q9SV07"/>
<dbReference type="Proteomes" id="UP000006548">
    <property type="component" value="Chromosome 3"/>
</dbReference>
<dbReference type="ExpressionAtlas" id="Q9SV07">
    <property type="expression patterns" value="baseline and differential"/>
</dbReference>
<dbReference type="GO" id="GO:0016020">
    <property type="term" value="C:membrane"/>
    <property type="evidence" value="ECO:0007669"/>
    <property type="project" value="UniProtKB-SubCell"/>
</dbReference>
<dbReference type="GO" id="GO:0008374">
    <property type="term" value="F:O-acyltransferase activity"/>
    <property type="evidence" value="ECO:0007669"/>
    <property type="project" value="InterPro"/>
</dbReference>
<dbReference type="GO" id="GO:0016127">
    <property type="term" value="P:sterol catabolic process"/>
    <property type="evidence" value="ECO:0000315"/>
    <property type="project" value="UniProtKB"/>
</dbReference>
<dbReference type="InterPro" id="IPR044851">
    <property type="entry name" value="Wax_synthase"/>
</dbReference>
<dbReference type="InterPro" id="IPR032805">
    <property type="entry name" value="Wax_synthase_dom"/>
</dbReference>
<dbReference type="InterPro" id="IPR017088">
    <property type="entry name" value="Wax_synthase_Magnoliopsida"/>
</dbReference>
<dbReference type="PANTHER" id="PTHR31595:SF46">
    <property type="entry name" value="ACYL-COA--STEROL O-ACYLTRANSFERASE 1"/>
    <property type="match status" value="1"/>
</dbReference>
<dbReference type="PANTHER" id="PTHR31595">
    <property type="entry name" value="LONG-CHAIN-ALCOHOL O-FATTY-ACYLTRANSFERASE 3-RELATED"/>
    <property type="match status" value="1"/>
</dbReference>
<dbReference type="Pfam" id="PF13813">
    <property type="entry name" value="MBOAT_2"/>
    <property type="match status" value="1"/>
</dbReference>
<dbReference type="PIRSF" id="PIRSF037006">
    <property type="entry name" value="Wax_synthase"/>
    <property type="match status" value="1"/>
</dbReference>
<accession>Q9SV07</accession>
<proteinExistence type="evidence at protein level"/>
<comment type="function">
    <text evidence="3 4">Involved in the esterification of cycloartenol. Not implicated in the formation of sterol esters in flowers or during seed maturation. Has a substrate preference toward saturated fatty acyl donors (16:0 &gt; 18:0 &gt; 16:1 &gt; 18:1). Does not require triacyglycerols (TAGs) as a fatty acyl donor, and is unable to acylate diacylglycerol to produce TAG.</text>
</comment>
<comment type="interaction">
    <interactant intactId="EBI-2025397">
        <id>Q9SV07</id>
    </interactant>
    <interactant intactId="EBI-449385">
        <id>P34791</id>
        <label>CYP20-3</label>
    </interactant>
    <organismsDiffer>false</organismsDiffer>
    <experiments>3</experiments>
</comment>
<comment type="subcellular location">
    <subcellularLocation>
        <location evidence="5">Membrane</location>
        <topology evidence="5">Multi-pass membrane protein</topology>
    </subcellularLocation>
</comment>
<comment type="developmental stage">
    <text evidence="2">Increased expression during seed development and as pollen development proceeded from uninucleate microspore to mature pollen.</text>
</comment>
<comment type="disruption phenotype">
    <text evidence="4">No visible phenotype.</text>
</comment>
<comment type="similarity">
    <text evidence="5">Belongs to the wax synthase family.</text>
</comment>
<sequence>MASFIKAWGLVIISLCYTFFIAKLVPKGIKRLILFFPVFLIFFIVPFLIYSLHLLGITAFFIAWLANFKLLLFALGRGPLSSNHKPLSLPIFLAVSCLPIKIQLSPKPTKTHSHEGSTEGPLIYTIKAVFVVLIIKAYEYSTKLPEKVVLTLYAIHIYFALEIILAATAAAVRAMSDLELEPQFNKPYLATSLQDFWGRRWNLMVTGILRPTVYEPSLQLFSVLGPNYSQILAAFGTFVVSGIMHELIFFYMGRLRPDWKMMWFFLINGFCTTVEIAIKKTINGRWRFPKAISQVLTLTFVMVTALWLFLPEFNRCNIVEKALDEYAAIGAFAVEVRRKLTAYLF</sequence>
<gene>
    <name type="primary">ASAT1</name>
    <name type="ordered locus">At3g51970</name>
    <name type="ORF">F4F15.80</name>
</gene>
<name>ASAT1_ARATH</name>
<evidence type="ECO:0000255" key="1"/>
<evidence type="ECO:0000269" key="2">
    <source>
    </source>
</evidence>
<evidence type="ECO:0000269" key="3">
    <source>
    </source>
</evidence>
<evidence type="ECO:0000269" key="4">
    <source>
    </source>
</evidence>
<evidence type="ECO:0000305" key="5"/>
<organism>
    <name type="scientific">Arabidopsis thaliana</name>
    <name type="common">Mouse-ear cress</name>
    <dbReference type="NCBI Taxonomy" id="3702"/>
    <lineage>
        <taxon>Eukaryota</taxon>
        <taxon>Viridiplantae</taxon>
        <taxon>Streptophyta</taxon>
        <taxon>Embryophyta</taxon>
        <taxon>Tracheophyta</taxon>
        <taxon>Spermatophyta</taxon>
        <taxon>Magnoliopsida</taxon>
        <taxon>eudicotyledons</taxon>
        <taxon>Gunneridae</taxon>
        <taxon>Pentapetalae</taxon>
        <taxon>rosids</taxon>
        <taxon>malvids</taxon>
        <taxon>Brassicales</taxon>
        <taxon>Brassicaceae</taxon>
        <taxon>Camelineae</taxon>
        <taxon>Arabidopsis</taxon>
    </lineage>
</organism>
<reference key="1">
    <citation type="journal article" date="2000" name="Nature">
        <title>Sequence and analysis of chromosome 3 of the plant Arabidopsis thaliana.</title>
        <authorList>
            <person name="Salanoubat M."/>
            <person name="Lemcke K."/>
            <person name="Rieger M."/>
            <person name="Ansorge W."/>
            <person name="Unseld M."/>
            <person name="Fartmann B."/>
            <person name="Valle G."/>
            <person name="Bloecker H."/>
            <person name="Perez-Alonso M."/>
            <person name="Obermaier B."/>
            <person name="Delseny M."/>
            <person name="Boutry M."/>
            <person name="Grivell L.A."/>
            <person name="Mache R."/>
            <person name="Puigdomenech P."/>
            <person name="De Simone V."/>
            <person name="Choisne N."/>
            <person name="Artiguenave F."/>
            <person name="Robert C."/>
            <person name="Brottier P."/>
            <person name="Wincker P."/>
            <person name="Cattolico L."/>
            <person name="Weissenbach J."/>
            <person name="Saurin W."/>
            <person name="Quetier F."/>
            <person name="Schaefer M."/>
            <person name="Mueller-Auer S."/>
            <person name="Gabel C."/>
            <person name="Fuchs M."/>
            <person name="Benes V."/>
            <person name="Wurmbach E."/>
            <person name="Drzonek H."/>
            <person name="Erfle H."/>
            <person name="Jordan N."/>
            <person name="Bangert S."/>
            <person name="Wiedelmann R."/>
            <person name="Kranz H."/>
            <person name="Voss H."/>
            <person name="Holland R."/>
            <person name="Brandt P."/>
            <person name="Nyakatura G."/>
            <person name="Vezzi A."/>
            <person name="D'Angelo M."/>
            <person name="Pallavicini A."/>
            <person name="Toppo S."/>
            <person name="Simionati B."/>
            <person name="Conrad A."/>
            <person name="Hornischer K."/>
            <person name="Kauer G."/>
            <person name="Loehnert T.-H."/>
            <person name="Nordsiek G."/>
            <person name="Reichelt J."/>
            <person name="Scharfe M."/>
            <person name="Schoen O."/>
            <person name="Bargues M."/>
            <person name="Terol J."/>
            <person name="Climent J."/>
            <person name="Navarro P."/>
            <person name="Collado C."/>
            <person name="Perez-Perez A."/>
            <person name="Ottenwaelder B."/>
            <person name="Duchemin D."/>
            <person name="Cooke R."/>
            <person name="Laudie M."/>
            <person name="Berger-Llauro C."/>
            <person name="Purnelle B."/>
            <person name="Masuy D."/>
            <person name="de Haan M."/>
            <person name="Maarse A.C."/>
            <person name="Alcaraz J.-P."/>
            <person name="Cottet A."/>
            <person name="Casacuberta E."/>
            <person name="Monfort A."/>
            <person name="Argiriou A."/>
            <person name="Flores M."/>
            <person name="Liguori R."/>
            <person name="Vitale D."/>
            <person name="Mannhaupt G."/>
            <person name="Haase D."/>
            <person name="Schoof H."/>
            <person name="Rudd S."/>
            <person name="Zaccaria P."/>
            <person name="Mewes H.-W."/>
            <person name="Mayer K.F.X."/>
            <person name="Kaul S."/>
            <person name="Town C.D."/>
            <person name="Koo H.L."/>
            <person name="Tallon L.J."/>
            <person name="Jenkins J."/>
            <person name="Rooney T."/>
            <person name="Rizzo M."/>
            <person name="Walts A."/>
            <person name="Utterback T."/>
            <person name="Fujii C.Y."/>
            <person name="Shea T.P."/>
            <person name="Creasy T.H."/>
            <person name="Haas B."/>
            <person name="Maiti R."/>
            <person name="Wu D."/>
            <person name="Peterson J."/>
            <person name="Van Aken S."/>
            <person name="Pai G."/>
            <person name="Militscher J."/>
            <person name="Sellers P."/>
            <person name="Gill J.E."/>
            <person name="Feldblyum T.V."/>
            <person name="Preuss D."/>
            <person name="Lin X."/>
            <person name="Nierman W.C."/>
            <person name="Salzberg S.L."/>
            <person name="White O."/>
            <person name="Venter J.C."/>
            <person name="Fraser C.M."/>
            <person name="Kaneko T."/>
            <person name="Nakamura Y."/>
            <person name="Sato S."/>
            <person name="Kato T."/>
            <person name="Asamizu E."/>
            <person name="Sasamoto S."/>
            <person name="Kimura T."/>
            <person name="Idesawa K."/>
            <person name="Kawashima K."/>
            <person name="Kishida Y."/>
            <person name="Kiyokawa C."/>
            <person name="Kohara M."/>
            <person name="Matsumoto M."/>
            <person name="Matsuno A."/>
            <person name="Muraki A."/>
            <person name="Nakayama S."/>
            <person name="Nakazaki N."/>
            <person name="Shinpo S."/>
            <person name="Takeuchi C."/>
            <person name="Wada T."/>
            <person name="Watanabe A."/>
            <person name="Yamada M."/>
            <person name="Yasuda M."/>
            <person name="Tabata S."/>
        </authorList>
    </citation>
    <scope>NUCLEOTIDE SEQUENCE [LARGE SCALE GENOMIC DNA]</scope>
    <source>
        <strain>cv. Columbia</strain>
    </source>
</reference>
<reference key="2">
    <citation type="journal article" date="2017" name="Plant J.">
        <title>Araport11: a complete reannotation of the Arabidopsis thaliana reference genome.</title>
        <authorList>
            <person name="Cheng C.Y."/>
            <person name="Krishnakumar V."/>
            <person name="Chan A.P."/>
            <person name="Thibaud-Nissen F."/>
            <person name="Schobel S."/>
            <person name="Town C.D."/>
        </authorList>
    </citation>
    <scope>GENOME REANNOTATION</scope>
    <source>
        <strain>cv. Columbia</strain>
    </source>
</reference>
<reference key="3">
    <citation type="journal article" date="2003" name="Science">
        <title>Empirical analysis of transcriptional activity in the Arabidopsis genome.</title>
        <authorList>
            <person name="Yamada K."/>
            <person name="Lim J."/>
            <person name="Dale J.M."/>
            <person name="Chen H."/>
            <person name="Shinn P."/>
            <person name="Palm C.J."/>
            <person name="Southwick A.M."/>
            <person name="Wu H.C."/>
            <person name="Kim C.J."/>
            <person name="Nguyen M."/>
            <person name="Pham P.K."/>
            <person name="Cheuk R.F."/>
            <person name="Karlin-Newmann G."/>
            <person name="Liu S.X."/>
            <person name="Lam B."/>
            <person name="Sakano H."/>
            <person name="Wu T."/>
            <person name="Yu G."/>
            <person name="Miranda M."/>
            <person name="Quach H.L."/>
            <person name="Tripp M."/>
            <person name="Chang C.H."/>
            <person name="Lee J.M."/>
            <person name="Toriumi M.J."/>
            <person name="Chan M.M."/>
            <person name="Tang C.C."/>
            <person name="Onodera C.S."/>
            <person name="Deng J.M."/>
            <person name="Akiyama K."/>
            <person name="Ansari Y."/>
            <person name="Arakawa T."/>
            <person name="Banh J."/>
            <person name="Banno F."/>
            <person name="Bowser L."/>
            <person name="Brooks S.Y."/>
            <person name="Carninci P."/>
            <person name="Chao Q."/>
            <person name="Choy N."/>
            <person name="Enju A."/>
            <person name="Goldsmith A.D."/>
            <person name="Gurjal M."/>
            <person name="Hansen N.F."/>
            <person name="Hayashizaki Y."/>
            <person name="Johnson-Hopson C."/>
            <person name="Hsuan V.W."/>
            <person name="Iida K."/>
            <person name="Karnes M."/>
            <person name="Khan S."/>
            <person name="Koesema E."/>
            <person name="Ishida J."/>
            <person name="Jiang P.X."/>
            <person name="Jones T."/>
            <person name="Kawai J."/>
            <person name="Kamiya A."/>
            <person name="Meyers C."/>
            <person name="Nakajima M."/>
            <person name="Narusaka M."/>
            <person name="Seki M."/>
            <person name="Sakurai T."/>
            <person name="Satou M."/>
            <person name="Tamse R."/>
            <person name="Vaysberg M."/>
            <person name="Wallender E.K."/>
            <person name="Wong C."/>
            <person name="Yamamura Y."/>
            <person name="Yuan S."/>
            <person name="Shinozaki K."/>
            <person name="Davis R.W."/>
            <person name="Theologis A."/>
            <person name="Ecker J.R."/>
        </authorList>
    </citation>
    <scope>NUCLEOTIDE SEQUENCE [LARGE SCALE MRNA]</scope>
    <source>
        <strain>cv. Columbia</strain>
    </source>
</reference>
<reference key="4">
    <citation type="submission" date="2004-09" db="EMBL/GenBank/DDBJ databases">
        <title>Large-scale analysis of RIKEN Arabidopsis full-length (RAFL) cDNAs.</title>
        <authorList>
            <person name="Totoki Y."/>
            <person name="Seki M."/>
            <person name="Ishida J."/>
            <person name="Nakajima M."/>
            <person name="Enju A."/>
            <person name="Kamiya A."/>
            <person name="Narusaka M."/>
            <person name="Shin-i T."/>
            <person name="Nakagawa M."/>
            <person name="Sakamoto N."/>
            <person name="Oishi K."/>
            <person name="Kohara Y."/>
            <person name="Kobayashi M."/>
            <person name="Toyoda A."/>
            <person name="Sakaki Y."/>
            <person name="Sakurai T."/>
            <person name="Iida K."/>
            <person name="Akiyama K."/>
            <person name="Satou M."/>
            <person name="Toyoda T."/>
            <person name="Konagaya A."/>
            <person name="Carninci P."/>
            <person name="Kawai J."/>
            <person name="Hayashizaki Y."/>
            <person name="Shinozaki K."/>
        </authorList>
    </citation>
    <scope>NUCLEOTIDE SEQUENCE [LARGE SCALE MRNA]</scope>
    <source>
        <strain>cv. Columbia</strain>
    </source>
</reference>
<reference key="5">
    <citation type="journal article" date="2004" name="Genome Biol.">
        <title>Transcriptome analysis of haploid male gametophyte development in Arabidopsis.</title>
        <authorList>
            <person name="Honys D."/>
            <person name="Twell D."/>
        </authorList>
    </citation>
    <scope>DEVELOPMENTAL STAGE</scope>
</reference>
<reference key="6">
    <citation type="journal article" date="2007" name="Plant Physiol.">
        <title>Biosynthesis of phytosterol esters: identification of a sterol o-acyltransferase in Arabidopsis.</title>
        <authorList>
            <person name="Chen Q."/>
            <person name="Steinhauer L."/>
            <person name="Hammerlindl J."/>
            <person name="Keller W."/>
            <person name="Zou J."/>
        </authorList>
    </citation>
    <scope>IDENTIFICATION</scope>
    <scope>FUNCTION</scope>
</reference>
<reference key="7">
    <citation type="journal article" date="2010" name="Plant Physiol.">
        <title>Involvement of the phospholipid sterol acyltransferase1 in plant sterol homeostasis and leaf senescence.</title>
        <authorList>
            <person name="Bouvier-Nave P."/>
            <person name="Berna A."/>
            <person name="Noiriel A."/>
            <person name="Compagnon V."/>
            <person name="Carlsson A.S."/>
            <person name="Banas A."/>
            <person name="Stymne S."/>
            <person name="Schaller H."/>
        </authorList>
    </citation>
    <scope>FUNCTION</scope>
    <scope>DISRUPTION PHENOTYPE</scope>
</reference>
<keyword id="KW-0012">Acyltransferase</keyword>
<keyword id="KW-0443">Lipid metabolism</keyword>
<keyword id="KW-0472">Membrane</keyword>
<keyword id="KW-1185">Reference proteome</keyword>
<keyword id="KW-0753">Steroid metabolism</keyword>
<keyword id="KW-0808">Transferase</keyword>
<keyword id="KW-0812">Transmembrane</keyword>
<keyword id="KW-1133">Transmembrane helix</keyword>
<protein>
    <recommendedName>
        <fullName>Acyl-CoA--sterol O-acyltransferase 1</fullName>
        <ecNumber>2.3.1.-</ecNumber>
    </recommendedName>
    <alternativeName>
        <fullName>Sterol O-acyltransferase 1</fullName>
    </alternativeName>
</protein>